<reference key="1">
    <citation type="journal article" date="1986" name="Nucleic Acids Res.">
        <title>Nucleotide sequence and organization of dnaB gene and neighbouring genes on the Bacillus subtilis chromosome.</title>
        <authorList>
            <person name="Ogasawara N."/>
            <person name="Moriya S."/>
            <person name="Mazza P.G."/>
            <person name="Yoshikawa H."/>
        </authorList>
    </citation>
    <scope>NUCLEOTIDE SEQUENCE [GENOMIC DNA]</scope>
    <source>
        <strain>168</strain>
    </source>
</reference>
<reference key="2">
    <citation type="journal article" date="1996" name="Microbiology">
        <title>The dnaB-pheA (256 degrees-240 degrees) region of the Bacillus subtilis chromosome containing genes responsible for stress responses, the utilization of plant cell walls and primary metabolism.</title>
        <authorList>
            <person name="Wipat A."/>
            <person name="Carter N."/>
            <person name="Brignell C.S."/>
            <person name="Guy J.B."/>
            <person name="Piper K."/>
            <person name="Sanders J."/>
            <person name="Emmerson P.T."/>
            <person name="Harwood C.R."/>
        </authorList>
    </citation>
    <scope>NUCLEOTIDE SEQUENCE [GENOMIC DNA]</scope>
    <source>
        <strain>168</strain>
    </source>
</reference>
<reference key="3">
    <citation type="journal article" date="1997" name="Microbiology">
        <title>Sequencing and functional annotation of the Bacillus subtilis genes in the 200 kb rrnB-dnaB region.</title>
        <authorList>
            <person name="Lapidus A."/>
            <person name="Galleron N."/>
            <person name="Sorokin A."/>
            <person name="Ehrlich S.D."/>
        </authorList>
    </citation>
    <scope>NUCLEOTIDE SEQUENCE [GENOMIC DNA]</scope>
    <source>
        <strain>168</strain>
    </source>
</reference>
<reference key="4">
    <citation type="journal article" date="1997" name="Nature">
        <title>The complete genome sequence of the Gram-positive bacterium Bacillus subtilis.</title>
        <authorList>
            <person name="Kunst F."/>
            <person name="Ogasawara N."/>
            <person name="Moszer I."/>
            <person name="Albertini A.M."/>
            <person name="Alloni G."/>
            <person name="Azevedo V."/>
            <person name="Bertero M.G."/>
            <person name="Bessieres P."/>
            <person name="Bolotin A."/>
            <person name="Borchert S."/>
            <person name="Borriss R."/>
            <person name="Boursier L."/>
            <person name="Brans A."/>
            <person name="Braun M."/>
            <person name="Brignell S.C."/>
            <person name="Bron S."/>
            <person name="Brouillet S."/>
            <person name="Bruschi C.V."/>
            <person name="Caldwell B."/>
            <person name="Capuano V."/>
            <person name="Carter N.M."/>
            <person name="Choi S.-K."/>
            <person name="Codani J.-J."/>
            <person name="Connerton I.F."/>
            <person name="Cummings N.J."/>
            <person name="Daniel R.A."/>
            <person name="Denizot F."/>
            <person name="Devine K.M."/>
            <person name="Duesterhoeft A."/>
            <person name="Ehrlich S.D."/>
            <person name="Emmerson P.T."/>
            <person name="Entian K.-D."/>
            <person name="Errington J."/>
            <person name="Fabret C."/>
            <person name="Ferrari E."/>
            <person name="Foulger D."/>
            <person name="Fritz C."/>
            <person name="Fujita M."/>
            <person name="Fujita Y."/>
            <person name="Fuma S."/>
            <person name="Galizzi A."/>
            <person name="Galleron N."/>
            <person name="Ghim S.-Y."/>
            <person name="Glaser P."/>
            <person name="Goffeau A."/>
            <person name="Golightly E.J."/>
            <person name="Grandi G."/>
            <person name="Guiseppi G."/>
            <person name="Guy B.J."/>
            <person name="Haga K."/>
            <person name="Haiech J."/>
            <person name="Harwood C.R."/>
            <person name="Henaut A."/>
            <person name="Hilbert H."/>
            <person name="Holsappel S."/>
            <person name="Hosono S."/>
            <person name="Hullo M.-F."/>
            <person name="Itaya M."/>
            <person name="Jones L.-M."/>
            <person name="Joris B."/>
            <person name="Karamata D."/>
            <person name="Kasahara Y."/>
            <person name="Klaerr-Blanchard M."/>
            <person name="Klein C."/>
            <person name="Kobayashi Y."/>
            <person name="Koetter P."/>
            <person name="Koningstein G."/>
            <person name="Krogh S."/>
            <person name="Kumano M."/>
            <person name="Kurita K."/>
            <person name="Lapidus A."/>
            <person name="Lardinois S."/>
            <person name="Lauber J."/>
            <person name="Lazarevic V."/>
            <person name="Lee S.-M."/>
            <person name="Levine A."/>
            <person name="Liu H."/>
            <person name="Masuda S."/>
            <person name="Mauel C."/>
            <person name="Medigue C."/>
            <person name="Medina N."/>
            <person name="Mellado R.P."/>
            <person name="Mizuno M."/>
            <person name="Moestl D."/>
            <person name="Nakai S."/>
            <person name="Noback M."/>
            <person name="Noone D."/>
            <person name="O'Reilly M."/>
            <person name="Ogawa K."/>
            <person name="Ogiwara A."/>
            <person name="Oudega B."/>
            <person name="Park S.-H."/>
            <person name="Parro V."/>
            <person name="Pohl T.M."/>
            <person name="Portetelle D."/>
            <person name="Porwollik S."/>
            <person name="Prescott A.M."/>
            <person name="Presecan E."/>
            <person name="Pujic P."/>
            <person name="Purnelle B."/>
            <person name="Rapoport G."/>
            <person name="Rey M."/>
            <person name="Reynolds S."/>
            <person name="Rieger M."/>
            <person name="Rivolta C."/>
            <person name="Rocha E."/>
            <person name="Roche B."/>
            <person name="Rose M."/>
            <person name="Sadaie Y."/>
            <person name="Sato T."/>
            <person name="Scanlan E."/>
            <person name="Schleich S."/>
            <person name="Schroeter R."/>
            <person name="Scoffone F."/>
            <person name="Sekiguchi J."/>
            <person name="Sekowska A."/>
            <person name="Seror S.J."/>
            <person name="Serror P."/>
            <person name="Shin B.-S."/>
            <person name="Soldo B."/>
            <person name="Sorokin A."/>
            <person name="Tacconi E."/>
            <person name="Takagi T."/>
            <person name="Takahashi H."/>
            <person name="Takemaru K."/>
            <person name="Takeuchi M."/>
            <person name="Tamakoshi A."/>
            <person name="Tanaka T."/>
            <person name="Terpstra P."/>
            <person name="Tognoni A."/>
            <person name="Tosato V."/>
            <person name="Uchiyama S."/>
            <person name="Vandenbol M."/>
            <person name="Vannier F."/>
            <person name="Vassarotti A."/>
            <person name="Viari A."/>
            <person name="Wambutt R."/>
            <person name="Wedler E."/>
            <person name="Wedler H."/>
            <person name="Weitzenegger T."/>
            <person name="Winters P."/>
            <person name="Wipat A."/>
            <person name="Yamamoto H."/>
            <person name="Yamane K."/>
            <person name="Yasumoto K."/>
            <person name="Yata K."/>
            <person name="Yoshida K."/>
            <person name="Yoshikawa H.-F."/>
            <person name="Zumstein E."/>
            <person name="Yoshikawa H."/>
            <person name="Danchin A."/>
        </authorList>
    </citation>
    <scope>NUCLEOTIDE SEQUENCE [LARGE SCALE GENOMIC DNA]</scope>
    <source>
        <strain>168</strain>
    </source>
</reference>
<reference key="5">
    <citation type="journal article" date="1987" name="Proc. Natl. Acad. Sci. U.S.A.">
        <title>Nucleotide sequence of Bacillus subtilis dnaB: a gene essential for DNA replication initiation and membrane attachment.</title>
        <authorList>
            <person name="Hoshino T."/>
            <person name="McKenzie T."/>
            <person name="Schmidt S."/>
            <person name="Tanaka T."/>
            <person name="Sueoka N."/>
        </authorList>
    </citation>
    <scope>NUCLEOTIDE SEQUENCE [GENOMIC DNA] OF 1-206</scope>
</reference>
<reference key="6">
    <citation type="journal article" date="1992" name="Nucleic Acids Res.">
        <title>Archaebacterial virus SSV1 encodes a putative DnaA-like protein.</title>
        <authorList>
            <person name="Koonin E.V."/>
        </authorList>
    </citation>
    <scope>SIMILARITY TO DNAA</scope>
</reference>
<reference key="7">
    <citation type="journal article" date="1995" name="Microbiology">
        <title>The Bacillus subtilis dnaI gene is part of the dnaB operon.</title>
        <authorList>
            <person name="Bruand C."/>
            <person name="Ehrlich S.D."/>
        </authorList>
    </citation>
    <scope>IDENTIFICATION</scope>
    <scope>MUTAGENESIS OF GLY-305</scope>
</reference>
<reference key="8">
    <citation type="journal article" date="2000" name="Mol. Microbiol.">
        <title>Subcellular localization of Dna-initiation proteins of Bacillus subtilis: evidence that chromosome replication begins at either edge of the nucleoids.</title>
        <authorList>
            <person name="Imai Y."/>
            <person name="Ogasawara N."/>
            <person name="Ishigo-Oka D."/>
            <person name="Kadoya R."/>
            <person name="Daito T."/>
            <person name="Moriya S."/>
        </authorList>
    </citation>
    <scope>INTERACTION WITH DNAC</scope>
    <scope>SUBCELLULAR LOCATION</scope>
    <source>
        <strain>CRK6000</strain>
    </source>
</reference>
<reference key="9">
    <citation type="journal article" date="2001" name="Mol. Microbiol.">
        <title>DnaB, DnaD and DnaI proteins are components of the Bacillus subtilis replication restart primosome.</title>
        <authorList>
            <person name="Bruand C."/>
            <person name="Farache M."/>
            <person name="McGovern S."/>
            <person name="Ehrlich S.D."/>
            <person name="Polard P."/>
        </authorList>
    </citation>
    <scope>FUNCTION</scope>
</reference>
<reference key="10">
    <citation type="journal article" date="2003" name="Mol. Cell">
        <title>A two-protein strategy for the functional loading of a cellular replicative DNA helicase.</title>
        <authorList>
            <person name="Velten M."/>
            <person name="McGovern S."/>
            <person name="Marsin S."/>
            <person name="Ehrlich S.D."/>
            <person name="Noirot P."/>
            <person name="Polard P."/>
        </authorList>
    </citation>
    <scope>FUNCTION</scope>
    <scope>SUBUNIT</scope>
    <scope>INTERACTION WITH DNAC</scope>
    <scope>MUTAGENESIS OF GLY-305</scope>
</reference>
<reference key="11">
    <citation type="journal article" date="2004" name="FEBS Lett.">
        <title>The Bacillus subtilis DnaD protein: a putative link between DNA remodeling and initiation of DNA replication.</title>
        <authorList>
            <person name="Turner I.J."/>
            <person name="Scott D.J."/>
            <person name="Allen S."/>
            <person name="Roberts C.J."/>
            <person name="Soultanas P."/>
        </authorList>
    </citation>
    <scope>SUBUNIT</scope>
</reference>
<reference key="12">
    <citation type="journal article" date="2006" name="Nucleic Acids Res.">
        <title>Helicase binding to DnaI exposes a cryptic DNA-binding site during helicase loading in Bacillus subtilis.</title>
        <authorList>
            <person name="Ioannou C."/>
            <person name="Schaeffer P.M."/>
            <person name="Dixon N.E."/>
            <person name="Soultanas P."/>
        </authorList>
    </citation>
    <scope>FUNCTION AS AN ATPASE</scope>
    <scope>COFACTOR</scope>
    <scope>SUBUNIT</scope>
    <scope>DOMAIN</scope>
    <scope>DNA-BINDING</scope>
    <scope>ATP-BINDING</scope>
    <scope>MUTAGENESIS OF CYS-67; CYS-70; CYS-76; HIS-84; CYS-101 AND LYS-174</scope>
</reference>
<reference key="13">
    <citation type="journal article" date="2010" name="Mol. Microbiol.">
        <title>Ordered association of helicase loader proteins with the Bacillus subtilis origin of replication in vivo.</title>
        <authorList>
            <person name="Smits W.K."/>
            <person name="Goranov A.I."/>
            <person name="Grossman A.D."/>
        </authorList>
    </citation>
    <scope>FUNCTION</scope>
    <scope>DNA REPLISOME ASSEMBLY</scope>
    <scope>DISRUPTION PHENOTYPE</scope>
    <scope>MUTAGENESIS OF GLY-305</scope>
</reference>
<reference key="14">
    <citation type="journal article" date="2010" name="Nucleic Acids Res.">
        <title>DnaB proteolysis in vivo regulates oligomerization and its localization at oriC in Bacillus subtilis.</title>
        <authorList>
            <person name="Grainger W.H."/>
            <person name="Machon C."/>
            <person name="Scott D.J."/>
            <person name="Soultanas P."/>
        </authorList>
    </citation>
    <scope>INDUCTION</scope>
    <source>
        <strain>168</strain>
    </source>
</reference>
<reference evidence="15" key="15">
    <citation type="journal article" date="2009" name="Nucleic Acids Res.">
        <title>A novel zinc-binding fold in the helicase interaction domain of the Bacillus subtilis DnaI helicase loader.</title>
        <authorList>
            <person name="Loscha K.V."/>
            <person name="Jaudzems K."/>
            <person name="Ioannou C."/>
            <person name="Su X.C."/>
            <person name="Hill F.R."/>
            <person name="Otting G."/>
            <person name="Dixon N.E."/>
            <person name="Liepinsh E."/>
        </authorList>
    </citation>
    <scope>STRUCTURE BY NMR OF 1-106</scope>
    <scope>COFACTOR</scope>
    <scope>SUBUNIT</scope>
    <scope>DOMAIN</scope>
    <scope>MUTAGENESIS OF CYS-76</scope>
</reference>
<reference evidence="16" key="16">
    <citation type="journal article" date="2013" name="Nat. Commun.">
        <title>Structure of a helicase-helicase loader complex reveals insights into the mechanism of bacterial primosome assembly.</title>
        <authorList>
            <person name="Liu B."/>
            <person name="Eliason W.K."/>
            <person name="Steitz T.A."/>
        </authorList>
    </citation>
    <scope>X-RAY CRYSTALLOGRAPHY (6.10 ANGSTROMS) IN COMPLEX WITH DNAB AND DNAG OF G.STEAROTHERMOPHILUS</scope>
    <scope>SUBUNIT</scope>
</reference>
<accession>P06567</accession>
<organism>
    <name type="scientific">Bacillus subtilis (strain 168)</name>
    <dbReference type="NCBI Taxonomy" id="224308"/>
    <lineage>
        <taxon>Bacteria</taxon>
        <taxon>Bacillati</taxon>
        <taxon>Bacillota</taxon>
        <taxon>Bacilli</taxon>
        <taxon>Bacillales</taxon>
        <taxon>Bacillaceae</taxon>
        <taxon>Bacillus</taxon>
    </lineage>
</organism>
<evidence type="ECO:0000269" key="1">
    <source>
    </source>
</evidence>
<evidence type="ECO:0000269" key="2">
    <source>
    </source>
</evidence>
<evidence type="ECO:0000269" key="3">
    <source>
    </source>
</evidence>
<evidence type="ECO:0000269" key="4">
    <source>
    </source>
</evidence>
<evidence type="ECO:0000269" key="5">
    <source>
    </source>
</evidence>
<evidence type="ECO:0000269" key="6">
    <source>
    </source>
</evidence>
<evidence type="ECO:0000269" key="7">
    <source>
    </source>
</evidence>
<evidence type="ECO:0000269" key="8">
    <source>
    </source>
</evidence>
<evidence type="ECO:0000269" key="9">
    <source>
    </source>
</evidence>
<evidence type="ECO:0000269" key="10">
    <source>
    </source>
</evidence>
<evidence type="ECO:0000303" key="11">
    <source>
    </source>
</evidence>
<evidence type="ECO:0000303" key="12">
    <source>
    </source>
</evidence>
<evidence type="ECO:0000303" key="13">
    <source>
    </source>
</evidence>
<evidence type="ECO:0000305" key="14"/>
<evidence type="ECO:0007744" key="15">
    <source>
        <dbReference type="PDB" id="2K7R"/>
    </source>
</evidence>
<evidence type="ECO:0007744" key="16">
    <source>
        <dbReference type="PDB" id="4M4W"/>
    </source>
</evidence>
<evidence type="ECO:0007829" key="17">
    <source>
        <dbReference type="PDB" id="2K7R"/>
    </source>
</evidence>
<protein>
    <recommendedName>
        <fullName evidence="11">Replicative helicase loader DnaI</fullName>
        <ecNumber evidence="5">3.6.4.-</ecNumber>
    </recommendedName>
    <alternativeName>
        <fullName>Primosomal protein DnaI</fullName>
    </alternativeName>
</protein>
<keyword id="KW-0002">3D-structure</keyword>
<keyword id="KW-0067">ATP-binding</keyword>
<keyword id="KW-0963">Cytoplasm</keyword>
<keyword id="KW-0235">DNA replication</keyword>
<keyword id="KW-0238">DNA-binding</keyword>
<keyword id="KW-0378">Hydrolase</keyword>
<keyword id="KW-0479">Metal-binding</keyword>
<keyword id="KW-0547">Nucleotide-binding</keyword>
<keyword id="KW-0639">Primosome</keyword>
<keyword id="KW-1185">Reference proteome</keyword>
<keyword id="KW-0862">Zinc</keyword>
<feature type="chain" id="PRO_0000114313" description="Replicative helicase loader DnaI">
    <location>
        <begin position="1"/>
        <end position="311"/>
    </location>
</feature>
<feature type="region of interest" description="N-terminal domain (Nd)" evidence="5">
    <location>
        <begin position="1"/>
        <end position="136"/>
    </location>
</feature>
<feature type="region of interest" description="C-terminal domain (Cd)" evidence="5">
    <location>
        <begin position="137"/>
        <end position="311"/>
    </location>
</feature>
<feature type="binding site" evidence="6 15">
    <location>
        <position position="67"/>
    </location>
    <ligand>
        <name>Zn(2+)</name>
        <dbReference type="ChEBI" id="CHEBI:29105"/>
    </ligand>
</feature>
<feature type="binding site" evidence="6 15">
    <location>
        <position position="70"/>
    </location>
    <ligand>
        <name>Zn(2+)</name>
        <dbReference type="ChEBI" id="CHEBI:29105"/>
    </ligand>
</feature>
<feature type="binding site" evidence="6 15">
    <location>
        <position position="84"/>
    </location>
    <ligand>
        <name>Zn(2+)</name>
        <dbReference type="ChEBI" id="CHEBI:29105"/>
    </ligand>
</feature>
<feature type="binding site" evidence="6 15">
    <location>
        <position position="101"/>
    </location>
    <ligand>
        <name>Zn(2+)</name>
        <dbReference type="ChEBI" id="CHEBI:29105"/>
    </ligand>
</feature>
<feature type="binding site" evidence="14">
    <location>
        <begin position="168"/>
        <end position="175"/>
    </location>
    <ligand>
        <name>ATP</name>
        <dbReference type="ChEBI" id="CHEBI:30616"/>
    </ligand>
</feature>
<feature type="mutagenesis site" description="Loss of Zn(2+) binding, no longer interacts with helicase." evidence="5 6">
    <original>C</original>
    <variation>A</variation>
    <location>
        <position position="67"/>
    </location>
</feature>
<feature type="mutagenesis site" description="Loss of Zn(2+) binding, very weakly interacts with helicase." evidence="5">
    <original>C</original>
    <variation>A</variation>
    <location>
        <position position="70"/>
    </location>
</feature>
<feature type="mutagenesis site" description="Partial loss of Zn(2+) binding, still interacts with helicase." evidence="5">
    <original>C</original>
    <variation>A</variation>
    <location>
        <position position="76"/>
    </location>
</feature>
<feature type="mutagenesis site" description="Loss of Zn(2+) binding, no longer interacts with helicase." evidence="5">
    <original>H</original>
    <variation>A</variation>
    <location>
        <position position="84"/>
    </location>
</feature>
<feature type="mutagenesis site" description="Partial loss of Zn(2+) binding, still interacts with helicase." evidence="5">
    <original>C</original>
    <variation>A</variation>
    <location>
        <position position="101"/>
    </location>
</feature>
<feature type="mutagenesis site" description="Reduced ATPase activity." evidence="5">
    <original>K</original>
    <variation>A</variation>
    <location>
        <position position="174"/>
    </location>
</feature>
<feature type="mutagenesis site" description="In dnaI2; thermosensitive, deficient in (re)inititation of chromosomal and plasmid DNA replication. Impaired loading of DnaC on ssDNA even in presence of DnaB. Loss of association of DnaC with oriC at 52 degrees Celsius." evidence="3 7 10">
    <original>G</original>
    <variation>E</variation>
    <location>
        <position position="305"/>
    </location>
</feature>
<feature type="sequence conflict" description="In Ref. 5; AAA22405." evidence="14" ref="5">
    <original>K</original>
    <variation>N</variation>
    <location>
        <position position="19"/>
    </location>
</feature>
<feature type="sequence conflict" description="In Ref. 5; AAA22405." evidence="14" ref="5">
    <original>M</original>
    <variation>T</variation>
    <location>
        <position position="24"/>
    </location>
</feature>
<feature type="helix" evidence="17">
    <location>
        <begin position="16"/>
        <end position="28"/>
    </location>
</feature>
<feature type="helix" evidence="17">
    <location>
        <begin position="32"/>
        <end position="40"/>
    </location>
</feature>
<feature type="turn" evidence="17">
    <location>
        <begin position="42"/>
        <end position="44"/>
    </location>
</feature>
<feature type="helix" evidence="17">
    <location>
        <begin position="47"/>
        <end position="52"/>
    </location>
</feature>
<feature type="helix" evidence="17">
    <location>
        <begin position="54"/>
        <end position="62"/>
    </location>
</feature>
<feature type="turn" evidence="17">
    <location>
        <begin position="68"/>
        <end position="70"/>
    </location>
</feature>
<feature type="strand" evidence="17">
    <location>
        <begin position="83"/>
        <end position="90"/>
    </location>
</feature>
<feature type="strand" evidence="17">
    <location>
        <begin position="93"/>
        <end position="100"/>
    </location>
</feature>
<feature type="helix" evidence="17">
    <location>
        <begin position="102"/>
        <end position="104"/>
    </location>
</feature>
<name>DNAI_BACSU</name>
<proteinExistence type="evidence at protein level"/>
<gene>
    <name evidence="13" type="primary">dnaI</name>
    <name evidence="12" type="synonym">ORF311</name>
    <name type="synonym">ytxA</name>
    <name type="ordered locus">BSU28980</name>
</gene>
<dbReference type="EC" id="3.6.4.-" evidence="5"/>
<dbReference type="EMBL" id="X04963">
    <property type="protein sequence ID" value="CAA28633.1"/>
    <property type="molecule type" value="Genomic_DNA"/>
</dbReference>
<dbReference type="EMBL" id="Z75208">
    <property type="protein sequence ID" value="CAA99605.1"/>
    <property type="molecule type" value="Genomic_DNA"/>
</dbReference>
<dbReference type="EMBL" id="AF008220">
    <property type="protein sequence ID" value="AAC00359.1"/>
    <property type="molecule type" value="Genomic_DNA"/>
</dbReference>
<dbReference type="EMBL" id="AL009126">
    <property type="protein sequence ID" value="CAB14858.1"/>
    <property type="molecule type" value="Genomic_DNA"/>
</dbReference>
<dbReference type="EMBL" id="M15183">
    <property type="protein sequence ID" value="AAA22405.1"/>
    <property type="molecule type" value="Genomic_DNA"/>
</dbReference>
<dbReference type="PIR" id="B24720">
    <property type="entry name" value="IQBS44"/>
</dbReference>
<dbReference type="RefSeq" id="NP_390776.1">
    <property type="nucleotide sequence ID" value="NC_000964.3"/>
</dbReference>
<dbReference type="RefSeq" id="WP_003229466.1">
    <property type="nucleotide sequence ID" value="NZ_OZ025638.1"/>
</dbReference>
<dbReference type="PDB" id="2K7R">
    <property type="method" value="NMR"/>
    <property type="chains" value="A=1-106"/>
</dbReference>
<dbReference type="PDB" id="4M4W">
    <property type="method" value="X-ray"/>
    <property type="resolution" value="6.10 A"/>
    <property type="chains" value="J/K/L/M/N/O=1-311"/>
</dbReference>
<dbReference type="PDBsum" id="2K7R"/>
<dbReference type="PDBsum" id="4M4W"/>
<dbReference type="BMRB" id="P06567"/>
<dbReference type="SMR" id="P06567"/>
<dbReference type="FunCoup" id="P06567">
    <property type="interactions" value="59"/>
</dbReference>
<dbReference type="IntAct" id="P06567">
    <property type="interactions" value="4"/>
</dbReference>
<dbReference type="STRING" id="224308.BSU28980"/>
<dbReference type="PaxDb" id="224308-BSU28980"/>
<dbReference type="EnsemblBacteria" id="CAB14858">
    <property type="protein sequence ID" value="CAB14858"/>
    <property type="gene ID" value="BSU_28980"/>
</dbReference>
<dbReference type="GeneID" id="936873"/>
<dbReference type="KEGG" id="bsu:BSU28980"/>
<dbReference type="PATRIC" id="fig|224308.179.peg.3147"/>
<dbReference type="eggNOG" id="COG1484">
    <property type="taxonomic scope" value="Bacteria"/>
</dbReference>
<dbReference type="InParanoid" id="P06567"/>
<dbReference type="OrthoDB" id="61127at2"/>
<dbReference type="PhylomeDB" id="P06567"/>
<dbReference type="BioCyc" id="BSUB:BSU28980-MONOMER"/>
<dbReference type="EvolutionaryTrace" id="P06567"/>
<dbReference type="Proteomes" id="UP000001570">
    <property type="component" value="Chromosome"/>
</dbReference>
<dbReference type="GO" id="GO:0005737">
    <property type="term" value="C:cytoplasm"/>
    <property type="evidence" value="ECO:0007669"/>
    <property type="project" value="UniProtKB-SubCell"/>
</dbReference>
<dbReference type="GO" id="GO:1990077">
    <property type="term" value="C:primosome complex"/>
    <property type="evidence" value="ECO:0007669"/>
    <property type="project" value="UniProtKB-KW"/>
</dbReference>
<dbReference type="GO" id="GO:0005524">
    <property type="term" value="F:ATP binding"/>
    <property type="evidence" value="ECO:0007669"/>
    <property type="project" value="UniProtKB-KW"/>
</dbReference>
<dbReference type="GO" id="GO:0016887">
    <property type="term" value="F:ATP hydrolysis activity"/>
    <property type="evidence" value="ECO:0007669"/>
    <property type="project" value="InterPro"/>
</dbReference>
<dbReference type="GO" id="GO:0003677">
    <property type="term" value="F:DNA binding"/>
    <property type="evidence" value="ECO:0007669"/>
    <property type="project" value="UniProtKB-KW"/>
</dbReference>
<dbReference type="GO" id="GO:0046872">
    <property type="term" value="F:metal ion binding"/>
    <property type="evidence" value="ECO:0007669"/>
    <property type="project" value="UniProtKB-KW"/>
</dbReference>
<dbReference type="GO" id="GO:0006260">
    <property type="term" value="P:DNA replication"/>
    <property type="evidence" value="ECO:0000318"/>
    <property type="project" value="GO_Central"/>
</dbReference>
<dbReference type="GO" id="GO:0006269">
    <property type="term" value="P:DNA replication, synthesis of primer"/>
    <property type="evidence" value="ECO:0007669"/>
    <property type="project" value="UniProtKB-KW"/>
</dbReference>
<dbReference type="CDD" id="cd00009">
    <property type="entry name" value="AAA"/>
    <property type="match status" value="1"/>
</dbReference>
<dbReference type="FunFam" id="3.40.50.300:FF:000880">
    <property type="entry name" value="Primosomal protein DnaI"/>
    <property type="match status" value="1"/>
</dbReference>
<dbReference type="Gene3D" id="3.40.50.300">
    <property type="entry name" value="P-loop containing nucleotide triphosphate hydrolases"/>
    <property type="match status" value="1"/>
</dbReference>
<dbReference type="InterPro" id="IPR003593">
    <property type="entry name" value="AAA+_ATPase"/>
</dbReference>
<dbReference type="InterPro" id="IPR013317">
    <property type="entry name" value="DnaA_dom"/>
</dbReference>
<dbReference type="InterPro" id="IPR009928">
    <property type="entry name" value="DnaI_N"/>
</dbReference>
<dbReference type="InterPro" id="IPR027417">
    <property type="entry name" value="P-loop_NTPase"/>
</dbReference>
<dbReference type="NCBIfam" id="NF006505">
    <property type="entry name" value="PRK08939.1"/>
    <property type="match status" value="1"/>
</dbReference>
<dbReference type="PANTHER" id="PTHR30050">
    <property type="entry name" value="CHROMOSOMAL REPLICATION INITIATOR PROTEIN DNAA"/>
    <property type="match status" value="1"/>
</dbReference>
<dbReference type="PANTHER" id="PTHR30050:SF8">
    <property type="entry name" value="PRIMOSOMAL PROTEIN DNAI"/>
    <property type="match status" value="1"/>
</dbReference>
<dbReference type="Pfam" id="PF00308">
    <property type="entry name" value="Bac_DnaA"/>
    <property type="match status" value="1"/>
</dbReference>
<dbReference type="Pfam" id="PF07319">
    <property type="entry name" value="DnaI_N"/>
    <property type="match status" value="1"/>
</dbReference>
<dbReference type="SMART" id="SM00382">
    <property type="entry name" value="AAA"/>
    <property type="match status" value="1"/>
</dbReference>
<dbReference type="SUPFAM" id="SSF52540">
    <property type="entry name" value="P-loop containing nucleoside triphosphate hydrolases"/>
    <property type="match status" value="1"/>
</dbReference>
<sequence>MEPIGRSLQGVTGRPDFQKRLEQMKEKVMKDQDVQAFLKENEEVIDQKMIEKSLNKLYEYIEQSKNCSYCSEDENCNNLLEGYHPKLVVNGRSIDIEYYECPVKRKLDQQKKQQSLMKSMYIQQDLLGATFQQVDISDPSRLAMFQHVTDFLKSYNETGKGKGLYLYGKFGVGKTFMLAAIANELAEKEYSSMIVYVPEFVRELKNSLQDQTLEEKLNMVKTTPVLMLDDIGAESMTSWVRDEVIGTVLQHRMSQQLPTFFSSNFSPDELKHHFTYSQRGEKEEVKAARLMERILYLAAPIRLDGENRRHP</sequence>
<comment type="function">
    <text evidence="2 3 5">Helps load the DnaC replicative helicase onto single-stranded (ss)DNA and simulates the helicase activity; in the presence of DnaB more helicase activity is seen (PubMed:12718886, PubMed:17003052). Regulates DnaC helicase activity, at low concentrations stimulates the DNA helicase and ATPase activities of DnaC (PubMed:12718886). Has no measurable ATPase activity after 1 hour incubation of 6 uM DnaI with or without DNA (PubMed:12718886). Another group has found the protein has weak ATPase activity that is not stimulated by ssDNA (PubMed:17003052). Whole protein binds forked DNA (but not ssDNA) weakly; ATP and ADPNP (probably 5'-adenylyl beta, gamma-imidodiphosphate) have no effect on DNA binding (PubMed:17003052). DnaB, DnaD and DnaI may be required for a PriA-independent pathway of replication fork restart (PubMed:11679082).</text>
</comment>
<comment type="catalytic activity">
    <reaction evidence="5">
        <text>ATP + H2O = ADP + phosphate + H(+)</text>
        <dbReference type="Rhea" id="RHEA:13065"/>
        <dbReference type="ChEBI" id="CHEBI:15377"/>
        <dbReference type="ChEBI" id="CHEBI:15378"/>
        <dbReference type="ChEBI" id="CHEBI:30616"/>
        <dbReference type="ChEBI" id="CHEBI:43474"/>
        <dbReference type="ChEBI" id="CHEBI:456216"/>
    </reaction>
    <physiologicalReaction direction="left-to-right" evidence="5">
        <dbReference type="Rhea" id="RHEA:13066"/>
    </physiologicalReaction>
</comment>
<comment type="cofactor">
    <cofactor evidence="5 6">
        <name>Zn(2+)</name>
        <dbReference type="ChEBI" id="CHEBI:29105"/>
    </cofactor>
</comment>
<comment type="subunit">
    <text evidence="1 3 4 5 7 9">The DNA replisome assembles sequentially on oriC in this order; DnaA, DnaD, DnaB, DnaI-DnaC helicase (PubMed:19968790). Monomer with a very minor amount of dimer in solution (PubMed:12718886, PubMed:24048025). Interacts with replicative helicase (from G.stearothermophilus, called DnaB); this interaction is disrupted by DnaD (PubMed:15556628). Interacts with replicative helicase DnaC, forms a DnaC(6):DnaI(6) complex (PubMed:10844689, PubMed:12718886, PubMed:17003052, PubMed:24048025). Interacts with the helicase as 3 dimers (PubMed:24048025). A stable complex with DnaG primase, DnaI(6):helicase(6):DnaG(3) fragment can be isolated; DnaI and DnaG do not contact each other (helicase and DnaG in this complex are derived from G.stearothermophilus) (PubMed:24048025).</text>
</comment>
<comment type="interaction">
    <interactant intactId="EBI-2122847">
        <id>P06567</id>
    </interactant>
    <interactant intactId="EBI-2122822">
        <id>P37469</id>
        <label>dnaC</label>
    </interactant>
    <organismsDiffer>false</organismsDiffer>
    <experiments>4</experiments>
</comment>
<comment type="subcellular location">
    <subcellularLocation>
        <location evidence="1">Cytoplasm</location>
    </subcellularLocation>
    <text evidence="1">Forms foci near both cell poles and in the middle of cells (PubMed:10844689).</text>
</comment>
<comment type="induction">
    <text evidence="8">Transcribed at constant levels during exponential growth.</text>
</comment>
<comment type="domain">
    <text evidence="5 6">The N-terminal domain (approximately residues 1-136, Nd) interacts with helicase DnaC and has a Zn(2+) cofactor (PubMed:17003052, PubMed:19255093). The C-terminal domain (approximately residues 137-311, Cd) has ATPase activity (PubMed:17003052). The ATPase activity of the Cd (not whole protein) is stimulated by ssDNA; Cd has a cryptic DNA-binding site that is masked by the Nd. The CTD binds both ssDNA and forked DNA (PubMed:17003052).</text>
</comment>
<comment type="disruption phenotype">
    <text evidence="7">Essential, it cannot be deleted; in depletion experiments DNA replication slows as soon as the protein is degraded and replication stops by 1 hour (PubMed:19968790).</text>
</comment>
<comment type="similarity">
    <text evidence="14">Belongs to the DnaI family.</text>
</comment>